<keyword id="KW-0030">Aminoacyl-tRNA synthetase</keyword>
<keyword id="KW-0067">ATP-binding</keyword>
<keyword id="KW-0963">Cytoplasm</keyword>
<keyword id="KW-0436">Ligase</keyword>
<keyword id="KW-0547">Nucleotide-binding</keyword>
<keyword id="KW-0648">Protein biosynthesis</keyword>
<keyword id="KW-1185">Reference proteome</keyword>
<evidence type="ECO:0000255" key="1">
    <source>
        <dbReference type="HAMAP-Rule" id="MF_00022"/>
    </source>
</evidence>
<comment type="function">
    <text evidence="1">Catalyzes the attachment of glutamate to tRNA(Glu) in a two-step reaction: glutamate is first activated by ATP to form Glu-AMP and then transferred to the acceptor end of tRNA(Glu).</text>
</comment>
<comment type="catalytic activity">
    <reaction evidence="1">
        <text>tRNA(Glu) + L-glutamate + ATP = L-glutamyl-tRNA(Glu) + AMP + diphosphate</text>
        <dbReference type="Rhea" id="RHEA:23540"/>
        <dbReference type="Rhea" id="RHEA-COMP:9663"/>
        <dbReference type="Rhea" id="RHEA-COMP:9680"/>
        <dbReference type="ChEBI" id="CHEBI:29985"/>
        <dbReference type="ChEBI" id="CHEBI:30616"/>
        <dbReference type="ChEBI" id="CHEBI:33019"/>
        <dbReference type="ChEBI" id="CHEBI:78442"/>
        <dbReference type="ChEBI" id="CHEBI:78520"/>
        <dbReference type="ChEBI" id="CHEBI:456215"/>
        <dbReference type="EC" id="6.1.1.17"/>
    </reaction>
</comment>
<comment type="subunit">
    <text evidence="1">Monomer.</text>
</comment>
<comment type="subcellular location">
    <subcellularLocation>
        <location evidence="1">Cytoplasm</location>
    </subcellularLocation>
</comment>
<comment type="similarity">
    <text evidence="1">Belongs to the class-I aminoacyl-tRNA synthetase family. Glutamate--tRNA ligase type 1 subfamily.</text>
</comment>
<sequence length="473" mass="55832">MTVRTRFAPSPTGELHLGSIRTALYSWLFARKNNGEFILRIEDTDEERIKKISINNIIETMKLLGLNWDHGPYFQTKKLEKYNIIAKEMIYSGIAYKCYCSKNRINNLRIMQINKGEKPKYDGFCRNIEEKNIKNKRFVVRFSNPKNGYVIFNDLIRGTLKFKNSELDDLIILRSNKIPTYNFCSVIDDHDMNISHVIRGEDHINNTPRQINIFKALKIKCPKYAHISMILDKDRKKLSKKNQSTDVMKYIKNGFLPEALLNYLVRLGWSYGNQEIFNIDEMKKLFNLKSVGKSSCIFDINKLLWINQYYIQKLSDYDISSQIKKFFNKKEIDFNQGPKIENLIKIFKKKSRTLKEIFNQILFFYEDFSKVNFDLIKKYFTIDTNVHLKIFCKKLEKTSLWSVEEIKNTFFCTIKELNFNIKKIAMPIRIILSGSEHSPSIYSIIYSCGKLQTIKKIKIAIKFINDNKKKLNL</sequence>
<dbReference type="EC" id="6.1.1.17" evidence="1"/>
<dbReference type="EMBL" id="BA000021">
    <property type="protein sequence ID" value="BAC24272.1"/>
    <property type="molecule type" value="Genomic_DNA"/>
</dbReference>
<dbReference type="SMR" id="Q8D375"/>
<dbReference type="STRING" id="36870.gene:10368612"/>
<dbReference type="KEGG" id="wbr:gltX"/>
<dbReference type="eggNOG" id="COG0008">
    <property type="taxonomic scope" value="Bacteria"/>
</dbReference>
<dbReference type="HOGENOM" id="CLU_015768_6_3_6"/>
<dbReference type="OrthoDB" id="9807503at2"/>
<dbReference type="Proteomes" id="UP000000562">
    <property type="component" value="Chromosome"/>
</dbReference>
<dbReference type="GO" id="GO:0005829">
    <property type="term" value="C:cytosol"/>
    <property type="evidence" value="ECO:0007669"/>
    <property type="project" value="TreeGrafter"/>
</dbReference>
<dbReference type="GO" id="GO:0005524">
    <property type="term" value="F:ATP binding"/>
    <property type="evidence" value="ECO:0007669"/>
    <property type="project" value="UniProtKB-UniRule"/>
</dbReference>
<dbReference type="GO" id="GO:0004818">
    <property type="term" value="F:glutamate-tRNA ligase activity"/>
    <property type="evidence" value="ECO:0007669"/>
    <property type="project" value="UniProtKB-UniRule"/>
</dbReference>
<dbReference type="GO" id="GO:0000049">
    <property type="term" value="F:tRNA binding"/>
    <property type="evidence" value="ECO:0007669"/>
    <property type="project" value="InterPro"/>
</dbReference>
<dbReference type="GO" id="GO:0008270">
    <property type="term" value="F:zinc ion binding"/>
    <property type="evidence" value="ECO:0007669"/>
    <property type="project" value="InterPro"/>
</dbReference>
<dbReference type="GO" id="GO:0006424">
    <property type="term" value="P:glutamyl-tRNA aminoacylation"/>
    <property type="evidence" value="ECO:0007669"/>
    <property type="project" value="UniProtKB-UniRule"/>
</dbReference>
<dbReference type="CDD" id="cd00808">
    <property type="entry name" value="GluRS_core"/>
    <property type="match status" value="1"/>
</dbReference>
<dbReference type="FunFam" id="3.40.50.620:FF:000007">
    <property type="entry name" value="Glutamate--tRNA ligase"/>
    <property type="match status" value="1"/>
</dbReference>
<dbReference type="Gene3D" id="1.10.10.350">
    <property type="match status" value="1"/>
</dbReference>
<dbReference type="Gene3D" id="3.40.50.620">
    <property type="entry name" value="HUPs"/>
    <property type="match status" value="1"/>
</dbReference>
<dbReference type="HAMAP" id="MF_00022">
    <property type="entry name" value="Glu_tRNA_synth_type1"/>
    <property type="match status" value="1"/>
</dbReference>
<dbReference type="InterPro" id="IPR045462">
    <property type="entry name" value="aa-tRNA-synth_I_cd-bd"/>
</dbReference>
<dbReference type="InterPro" id="IPR020751">
    <property type="entry name" value="aa-tRNA-synth_I_codon-bd_sub2"/>
</dbReference>
<dbReference type="InterPro" id="IPR008925">
    <property type="entry name" value="aa_tRNA-synth_I_cd-bd_sf"/>
</dbReference>
<dbReference type="InterPro" id="IPR004527">
    <property type="entry name" value="Glu-tRNA-ligase_bac/mito"/>
</dbReference>
<dbReference type="InterPro" id="IPR000924">
    <property type="entry name" value="Glu/Gln-tRNA-synth"/>
</dbReference>
<dbReference type="InterPro" id="IPR020058">
    <property type="entry name" value="Glu/Gln-tRNA-synth_Ib_cat-dom"/>
</dbReference>
<dbReference type="InterPro" id="IPR049940">
    <property type="entry name" value="GluQ/Sye"/>
</dbReference>
<dbReference type="InterPro" id="IPR033910">
    <property type="entry name" value="GluRS_core"/>
</dbReference>
<dbReference type="InterPro" id="IPR014729">
    <property type="entry name" value="Rossmann-like_a/b/a_fold"/>
</dbReference>
<dbReference type="NCBIfam" id="TIGR00464">
    <property type="entry name" value="gltX_bact"/>
    <property type="match status" value="1"/>
</dbReference>
<dbReference type="PANTHER" id="PTHR43311">
    <property type="entry name" value="GLUTAMATE--TRNA LIGASE"/>
    <property type="match status" value="1"/>
</dbReference>
<dbReference type="PANTHER" id="PTHR43311:SF2">
    <property type="entry name" value="GLUTAMATE--TRNA LIGASE, MITOCHONDRIAL-RELATED"/>
    <property type="match status" value="1"/>
</dbReference>
<dbReference type="Pfam" id="PF19269">
    <property type="entry name" value="Anticodon_2"/>
    <property type="match status" value="1"/>
</dbReference>
<dbReference type="Pfam" id="PF00749">
    <property type="entry name" value="tRNA-synt_1c"/>
    <property type="match status" value="1"/>
</dbReference>
<dbReference type="PRINTS" id="PR00987">
    <property type="entry name" value="TRNASYNTHGLU"/>
</dbReference>
<dbReference type="SUPFAM" id="SSF48163">
    <property type="entry name" value="An anticodon-binding domain of class I aminoacyl-tRNA synthetases"/>
    <property type="match status" value="1"/>
</dbReference>
<dbReference type="SUPFAM" id="SSF52374">
    <property type="entry name" value="Nucleotidylyl transferase"/>
    <property type="match status" value="1"/>
</dbReference>
<feature type="chain" id="PRO_0000119696" description="Glutamate--tRNA ligase">
    <location>
        <begin position="1"/>
        <end position="473"/>
    </location>
</feature>
<feature type="short sequence motif" description="'HIGH' region" evidence="1">
    <location>
        <begin position="9"/>
        <end position="19"/>
    </location>
</feature>
<feature type="short sequence motif" description="'KMSKS' region" evidence="1">
    <location>
        <begin position="237"/>
        <end position="241"/>
    </location>
</feature>
<feature type="binding site" evidence="1">
    <location>
        <position position="240"/>
    </location>
    <ligand>
        <name>ATP</name>
        <dbReference type="ChEBI" id="CHEBI:30616"/>
    </ligand>
</feature>
<accession>Q8D375</accession>
<gene>
    <name evidence="1" type="primary">gltX</name>
    <name type="ordered locus">WIGBR1260</name>
</gene>
<proteinExistence type="inferred from homology"/>
<reference key="1">
    <citation type="journal article" date="2002" name="Nat. Genet.">
        <title>Genome sequence of the endocellular obligate symbiont of tsetse flies, Wigglesworthia glossinidia.</title>
        <authorList>
            <person name="Akman L."/>
            <person name="Yamashita A."/>
            <person name="Watanabe H."/>
            <person name="Oshima K."/>
            <person name="Shiba T."/>
            <person name="Hattori M."/>
            <person name="Aksoy S."/>
        </authorList>
    </citation>
    <scope>NUCLEOTIDE SEQUENCE [LARGE SCALE GENOMIC DNA]</scope>
</reference>
<organism>
    <name type="scientific">Wigglesworthia glossinidia brevipalpis</name>
    <dbReference type="NCBI Taxonomy" id="36870"/>
    <lineage>
        <taxon>Bacteria</taxon>
        <taxon>Pseudomonadati</taxon>
        <taxon>Pseudomonadota</taxon>
        <taxon>Gammaproteobacteria</taxon>
        <taxon>Enterobacterales</taxon>
        <taxon>Erwiniaceae</taxon>
        <taxon>Wigglesworthia</taxon>
    </lineage>
</organism>
<name>SYE_WIGBR</name>
<protein>
    <recommendedName>
        <fullName evidence="1">Glutamate--tRNA ligase</fullName>
        <ecNumber evidence="1">6.1.1.17</ecNumber>
    </recommendedName>
    <alternativeName>
        <fullName evidence="1">Glutamyl-tRNA synthetase</fullName>
        <shortName evidence="1">GluRS</shortName>
    </alternativeName>
</protein>